<proteinExistence type="inferred from homology"/>
<evidence type="ECO:0000255" key="1">
    <source>
        <dbReference type="HAMAP-Rule" id="MF_00022"/>
    </source>
</evidence>
<accession>Q97KC9</accession>
<gene>
    <name evidence="1" type="primary">gltX</name>
    <name type="ordered locus">CA_C0990</name>
</gene>
<sequence>MAANEIRTRFAPSPTGYMHIGNLRTALYTYLIAKHEDGKFILRIEDTDQERYVEDALAVIYKTLEMTGLKHDEGPDVGGPVGPYVQSERKGLYLDYAKKLVEKGEAYYCFCSKERLDILKTNSEALKRPFKYDKHCANLSKEEVQEKLDAGVPYVIRQNNPTTGSTTFDDVIYGRISVDNSELDDMILIKSDGYPTYNFANVVDDHLMGITHVVRGNEYLSSAPKYNRLYEAFGWNVPIYVHCPPIMKDAHSKLSKRNGDASFQDLIEKGYLKEAVLNYIALLGWNPEGTNEILSLEDMVKLFDYTHINKSPAVFDPVKLKWMNGEYVRKLSLDEFHKAALSYYDGVITKENIDLKKISELIQTRVEIFSDIPEMVDFFNELPDYDIEMYTHKKMKTNPEISLDSLKNCLPVIENIEDWNLDNIQNTIMNYIKDLGVKNGVVLWPLRTALSGKKFTPGGAFEIADIIGKDESIRRIKIGIEKLEK</sequence>
<reference key="1">
    <citation type="journal article" date="2001" name="J. Bacteriol.">
        <title>Genome sequence and comparative analysis of the solvent-producing bacterium Clostridium acetobutylicum.</title>
        <authorList>
            <person name="Noelling J."/>
            <person name="Breton G."/>
            <person name="Omelchenko M.V."/>
            <person name="Makarova K.S."/>
            <person name="Zeng Q."/>
            <person name="Gibson R."/>
            <person name="Lee H.M."/>
            <person name="Dubois J."/>
            <person name="Qiu D."/>
            <person name="Hitti J."/>
            <person name="Wolf Y.I."/>
            <person name="Tatusov R.L."/>
            <person name="Sabathe F."/>
            <person name="Doucette-Stamm L.A."/>
            <person name="Soucaille P."/>
            <person name="Daly M.J."/>
            <person name="Bennett G.N."/>
            <person name="Koonin E.V."/>
            <person name="Smith D.R."/>
        </authorList>
    </citation>
    <scope>NUCLEOTIDE SEQUENCE [LARGE SCALE GENOMIC DNA]</scope>
    <source>
        <strain>ATCC 824 / DSM 792 / JCM 1419 / IAM 19013 / LMG 5710 / NBRC 13948 / NRRL B-527 / VKM B-1787 / 2291 / W</strain>
    </source>
</reference>
<protein>
    <recommendedName>
        <fullName evidence="1">Glutamate--tRNA ligase</fullName>
        <ecNumber evidence="1">6.1.1.17</ecNumber>
    </recommendedName>
    <alternativeName>
        <fullName evidence="1">Glutamyl-tRNA synthetase</fullName>
        <shortName evidence="1">GluRS</shortName>
    </alternativeName>
</protein>
<name>SYE_CLOAB</name>
<dbReference type="EC" id="6.1.1.17" evidence="1"/>
<dbReference type="EMBL" id="AE001437">
    <property type="protein sequence ID" value="AAK78966.1"/>
    <property type="molecule type" value="Genomic_DNA"/>
</dbReference>
<dbReference type="PIR" id="C97022">
    <property type="entry name" value="C97022"/>
</dbReference>
<dbReference type="RefSeq" id="NP_347626.1">
    <property type="nucleotide sequence ID" value="NC_003030.1"/>
</dbReference>
<dbReference type="RefSeq" id="WP_010964308.1">
    <property type="nucleotide sequence ID" value="NC_003030.1"/>
</dbReference>
<dbReference type="SMR" id="Q97KC9"/>
<dbReference type="STRING" id="272562.CA_C0990"/>
<dbReference type="GeneID" id="44997504"/>
<dbReference type="KEGG" id="cac:CA_C0990"/>
<dbReference type="PATRIC" id="fig|272562.8.peg.1199"/>
<dbReference type="eggNOG" id="COG0008">
    <property type="taxonomic scope" value="Bacteria"/>
</dbReference>
<dbReference type="HOGENOM" id="CLU_015768_6_3_9"/>
<dbReference type="OrthoDB" id="9807503at2"/>
<dbReference type="Proteomes" id="UP000000814">
    <property type="component" value="Chromosome"/>
</dbReference>
<dbReference type="GO" id="GO:0005737">
    <property type="term" value="C:cytoplasm"/>
    <property type="evidence" value="ECO:0007669"/>
    <property type="project" value="UniProtKB-SubCell"/>
</dbReference>
<dbReference type="GO" id="GO:0005524">
    <property type="term" value="F:ATP binding"/>
    <property type="evidence" value="ECO:0007669"/>
    <property type="project" value="UniProtKB-UniRule"/>
</dbReference>
<dbReference type="GO" id="GO:0004818">
    <property type="term" value="F:glutamate-tRNA ligase activity"/>
    <property type="evidence" value="ECO:0007669"/>
    <property type="project" value="UniProtKB-UniRule"/>
</dbReference>
<dbReference type="GO" id="GO:0000049">
    <property type="term" value="F:tRNA binding"/>
    <property type="evidence" value="ECO:0007669"/>
    <property type="project" value="InterPro"/>
</dbReference>
<dbReference type="GO" id="GO:0008270">
    <property type="term" value="F:zinc ion binding"/>
    <property type="evidence" value="ECO:0007669"/>
    <property type="project" value="InterPro"/>
</dbReference>
<dbReference type="GO" id="GO:0006424">
    <property type="term" value="P:glutamyl-tRNA aminoacylation"/>
    <property type="evidence" value="ECO:0007669"/>
    <property type="project" value="UniProtKB-UniRule"/>
</dbReference>
<dbReference type="CDD" id="cd00808">
    <property type="entry name" value="GluRS_core"/>
    <property type="match status" value="1"/>
</dbReference>
<dbReference type="FunFam" id="3.40.50.620:FF:000045">
    <property type="entry name" value="Glutamate--tRNA ligase, mitochondrial"/>
    <property type="match status" value="1"/>
</dbReference>
<dbReference type="Gene3D" id="1.10.10.350">
    <property type="match status" value="1"/>
</dbReference>
<dbReference type="Gene3D" id="3.40.50.620">
    <property type="entry name" value="HUPs"/>
    <property type="match status" value="1"/>
</dbReference>
<dbReference type="HAMAP" id="MF_00022">
    <property type="entry name" value="Glu_tRNA_synth_type1"/>
    <property type="match status" value="1"/>
</dbReference>
<dbReference type="InterPro" id="IPR045462">
    <property type="entry name" value="aa-tRNA-synth_I_cd-bd"/>
</dbReference>
<dbReference type="InterPro" id="IPR020751">
    <property type="entry name" value="aa-tRNA-synth_I_codon-bd_sub2"/>
</dbReference>
<dbReference type="InterPro" id="IPR001412">
    <property type="entry name" value="aa-tRNA-synth_I_CS"/>
</dbReference>
<dbReference type="InterPro" id="IPR008925">
    <property type="entry name" value="aa_tRNA-synth_I_cd-bd_sf"/>
</dbReference>
<dbReference type="InterPro" id="IPR004527">
    <property type="entry name" value="Glu-tRNA-ligase_bac/mito"/>
</dbReference>
<dbReference type="InterPro" id="IPR000924">
    <property type="entry name" value="Glu/Gln-tRNA-synth"/>
</dbReference>
<dbReference type="InterPro" id="IPR020058">
    <property type="entry name" value="Glu/Gln-tRNA-synth_Ib_cat-dom"/>
</dbReference>
<dbReference type="InterPro" id="IPR049940">
    <property type="entry name" value="GluQ/Sye"/>
</dbReference>
<dbReference type="InterPro" id="IPR033910">
    <property type="entry name" value="GluRS_core"/>
</dbReference>
<dbReference type="InterPro" id="IPR014729">
    <property type="entry name" value="Rossmann-like_a/b/a_fold"/>
</dbReference>
<dbReference type="NCBIfam" id="TIGR00464">
    <property type="entry name" value="gltX_bact"/>
    <property type="match status" value="1"/>
</dbReference>
<dbReference type="PANTHER" id="PTHR43311">
    <property type="entry name" value="GLUTAMATE--TRNA LIGASE"/>
    <property type="match status" value="1"/>
</dbReference>
<dbReference type="PANTHER" id="PTHR43311:SF2">
    <property type="entry name" value="GLUTAMATE--TRNA LIGASE, MITOCHONDRIAL-RELATED"/>
    <property type="match status" value="1"/>
</dbReference>
<dbReference type="Pfam" id="PF19269">
    <property type="entry name" value="Anticodon_2"/>
    <property type="match status" value="1"/>
</dbReference>
<dbReference type="Pfam" id="PF00749">
    <property type="entry name" value="tRNA-synt_1c"/>
    <property type="match status" value="1"/>
</dbReference>
<dbReference type="PRINTS" id="PR00987">
    <property type="entry name" value="TRNASYNTHGLU"/>
</dbReference>
<dbReference type="SUPFAM" id="SSF48163">
    <property type="entry name" value="An anticodon-binding domain of class I aminoacyl-tRNA synthetases"/>
    <property type="match status" value="1"/>
</dbReference>
<dbReference type="SUPFAM" id="SSF52374">
    <property type="entry name" value="Nucleotidylyl transferase"/>
    <property type="match status" value="1"/>
</dbReference>
<dbReference type="PROSITE" id="PS00178">
    <property type="entry name" value="AA_TRNA_LIGASE_I"/>
    <property type="match status" value="1"/>
</dbReference>
<keyword id="KW-0030">Aminoacyl-tRNA synthetase</keyword>
<keyword id="KW-0067">ATP-binding</keyword>
<keyword id="KW-0963">Cytoplasm</keyword>
<keyword id="KW-0436">Ligase</keyword>
<keyword id="KW-0547">Nucleotide-binding</keyword>
<keyword id="KW-0648">Protein biosynthesis</keyword>
<keyword id="KW-1185">Reference proteome</keyword>
<organism>
    <name type="scientific">Clostridium acetobutylicum (strain ATCC 824 / DSM 792 / JCM 1419 / IAM 19013 / LMG 5710 / NBRC 13948 / NRRL B-527 / VKM B-1787 / 2291 / W)</name>
    <dbReference type="NCBI Taxonomy" id="272562"/>
    <lineage>
        <taxon>Bacteria</taxon>
        <taxon>Bacillati</taxon>
        <taxon>Bacillota</taxon>
        <taxon>Clostridia</taxon>
        <taxon>Eubacteriales</taxon>
        <taxon>Clostridiaceae</taxon>
        <taxon>Clostridium</taxon>
    </lineage>
</organism>
<comment type="function">
    <text evidence="1">Catalyzes the attachment of glutamate to tRNA(Glu) in a two-step reaction: glutamate is first activated by ATP to form Glu-AMP and then transferred to the acceptor end of tRNA(Glu).</text>
</comment>
<comment type="catalytic activity">
    <reaction evidence="1">
        <text>tRNA(Glu) + L-glutamate + ATP = L-glutamyl-tRNA(Glu) + AMP + diphosphate</text>
        <dbReference type="Rhea" id="RHEA:23540"/>
        <dbReference type="Rhea" id="RHEA-COMP:9663"/>
        <dbReference type="Rhea" id="RHEA-COMP:9680"/>
        <dbReference type="ChEBI" id="CHEBI:29985"/>
        <dbReference type="ChEBI" id="CHEBI:30616"/>
        <dbReference type="ChEBI" id="CHEBI:33019"/>
        <dbReference type="ChEBI" id="CHEBI:78442"/>
        <dbReference type="ChEBI" id="CHEBI:78520"/>
        <dbReference type="ChEBI" id="CHEBI:456215"/>
        <dbReference type="EC" id="6.1.1.17"/>
    </reaction>
</comment>
<comment type="subunit">
    <text evidence="1">Monomer.</text>
</comment>
<comment type="subcellular location">
    <subcellularLocation>
        <location evidence="1">Cytoplasm</location>
    </subcellularLocation>
</comment>
<comment type="similarity">
    <text evidence="1">Belongs to the class-I aminoacyl-tRNA synthetase family. Glutamate--tRNA ligase type 1 subfamily.</text>
</comment>
<feature type="chain" id="PRO_0000119544" description="Glutamate--tRNA ligase">
    <location>
        <begin position="1"/>
        <end position="485"/>
    </location>
</feature>
<feature type="short sequence motif" description="'HIGH' region" evidence="1">
    <location>
        <begin position="12"/>
        <end position="22"/>
    </location>
</feature>
<feature type="short sequence motif" description="'KMSKS' region" evidence="1">
    <location>
        <begin position="253"/>
        <end position="257"/>
    </location>
</feature>
<feature type="binding site" evidence="1">
    <location>
        <position position="256"/>
    </location>
    <ligand>
        <name>ATP</name>
        <dbReference type="ChEBI" id="CHEBI:30616"/>
    </ligand>
</feature>